<comment type="function">
    <text evidence="6">Involved in the development of the fruiting body. Overexpression phenocopies the spnA null phenotype.</text>
</comment>
<comment type="catalytic activity">
    <reaction>
        <text>L-seryl-[protein] + ATP = O-phospho-L-seryl-[protein] + ADP + H(+)</text>
        <dbReference type="Rhea" id="RHEA:17989"/>
        <dbReference type="Rhea" id="RHEA-COMP:9863"/>
        <dbReference type="Rhea" id="RHEA-COMP:11604"/>
        <dbReference type="ChEBI" id="CHEBI:15378"/>
        <dbReference type="ChEBI" id="CHEBI:29999"/>
        <dbReference type="ChEBI" id="CHEBI:30616"/>
        <dbReference type="ChEBI" id="CHEBI:83421"/>
        <dbReference type="ChEBI" id="CHEBI:456216"/>
        <dbReference type="EC" id="2.7.11.1"/>
    </reaction>
</comment>
<comment type="catalytic activity">
    <reaction>
        <text>L-threonyl-[protein] + ATP = O-phospho-L-threonyl-[protein] + ADP + H(+)</text>
        <dbReference type="Rhea" id="RHEA:46608"/>
        <dbReference type="Rhea" id="RHEA-COMP:11060"/>
        <dbReference type="Rhea" id="RHEA-COMP:11605"/>
        <dbReference type="ChEBI" id="CHEBI:15378"/>
        <dbReference type="ChEBI" id="CHEBI:30013"/>
        <dbReference type="ChEBI" id="CHEBI:30616"/>
        <dbReference type="ChEBI" id="CHEBI:61977"/>
        <dbReference type="ChEBI" id="CHEBI:456216"/>
        <dbReference type="EC" id="2.7.11.1"/>
    </reaction>
</comment>
<comment type="subcellular location">
    <subcellularLocation>
        <location evidence="6">Cytoplasm</location>
        <location evidence="6">Cytoskeleton</location>
    </subcellularLocation>
    <subcellularLocation>
        <location evidence="6">Membrane</location>
    </subcellularLocation>
    <subcellularLocation>
        <location evidence="6">Nucleus</location>
    </subcellularLocation>
    <text>Localized in the subcortical region of the cell with some enrichment in cell protrusions. In developed cells, colocalized with spnA. May translocate to the nucleus in response to a regulatory signal.</text>
</comment>
<comment type="developmental stage">
    <text evidence="6">Not detected during axenic growth. Induced during aggregation with 2 peaks, one at 8 hours at the end of aggregation and one at 15 hours during later morphogenesis. Preferentially expressed in a subclass of prestalk cells.</text>
</comment>
<comment type="disruption phenotype">
    <text evidence="6">Null cells show weak and late developmental defects.</text>
</comment>
<comment type="similarity">
    <text evidence="7">Belongs to the protein kinase superfamily. TKL Ser/Thr protein kinase family.</text>
</comment>
<proteinExistence type="evidence at protein level"/>
<accession>Q54HC6</accession>
<keyword id="KW-0040">ANK repeat</keyword>
<keyword id="KW-0067">ATP-binding</keyword>
<keyword id="KW-0175">Coiled coil</keyword>
<keyword id="KW-0963">Cytoplasm</keyword>
<keyword id="KW-0206">Cytoskeleton</keyword>
<keyword id="KW-0418">Kinase</keyword>
<keyword id="KW-0472">Membrane</keyword>
<keyword id="KW-0479">Metal-binding</keyword>
<keyword id="KW-0547">Nucleotide-binding</keyword>
<keyword id="KW-0539">Nucleus</keyword>
<keyword id="KW-1185">Reference proteome</keyword>
<keyword id="KW-0677">Repeat</keyword>
<keyword id="KW-0723">Serine/threonine-protein kinase</keyword>
<keyword id="KW-0808">Transferase</keyword>
<keyword id="KW-0812">Transmembrane</keyword>
<keyword id="KW-1133">Transmembrane helix</keyword>
<keyword id="KW-0862">Zinc</keyword>
<keyword id="KW-0863">Zinc-finger</keyword>
<gene>
    <name type="primary">arkA</name>
    <name type="synonym">arck-1</name>
    <name type="ORF">DDB_G0289555</name>
</gene>
<dbReference type="EC" id="2.7.11.1"/>
<dbReference type="EMBL" id="AAFI02000143">
    <property type="protein sequence ID" value="EAL62663.1"/>
    <property type="molecule type" value="Genomic_DNA"/>
</dbReference>
<dbReference type="RefSeq" id="XP_636166.1">
    <property type="nucleotide sequence ID" value="XM_631074.1"/>
</dbReference>
<dbReference type="SMR" id="Q54HC6"/>
<dbReference type="FunCoup" id="Q54HC6">
    <property type="interactions" value="119"/>
</dbReference>
<dbReference type="GlyGen" id="Q54HC6">
    <property type="glycosylation" value="1 site"/>
</dbReference>
<dbReference type="PaxDb" id="44689-DDB0229363"/>
<dbReference type="EnsemblProtists" id="EAL62663">
    <property type="protein sequence ID" value="EAL62663"/>
    <property type="gene ID" value="DDB_G0289555"/>
</dbReference>
<dbReference type="GeneID" id="8627199"/>
<dbReference type="KEGG" id="ddi:DDB_G0289555"/>
<dbReference type="dictyBase" id="DDB_G0289555">
    <property type="gene designation" value="arkA"/>
</dbReference>
<dbReference type="VEuPathDB" id="AmoebaDB:DDB_G0289555"/>
<dbReference type="eggNOG" id="KOG0192">
    <property type="taxonomic scope" value="Eukaryota"/>
</dbReference>
<dbReference type="HOGENOM" id="CLU_250812_0_0_1"/>
<dbReference type="InParanoid" id="Q54HC6"/>
<dbReference type="OMA" id="PRENSQN"/>
<dbReference type="PRO" id="PR:Q54HC6"/>
<dbReference type="Proteomes" id="UP000002195">
    <property type="component" value="Chromosome 5"/>
</dbReference>
<dbReference type="GO" id="GO:0030863">
    <property type="term" value="C:cortical cytoskeleton"/>
    <property type="evidence" value="ECO:0000314"/>
    <property type="project" value="dictyBase"/>
</dbReference>
<dbReference type="GO" id="GO:0005737">
    <property type="term" value="C:cytoplasm"/>
    <property type="evidence" value="ECO:0000318"/>
    <property type="project" value="GO_Central"/>
</dbReference>
<dbReference type="GO" id="GO:0016020">
    <property type="term" value="C:membrane"/>
    <property type="evidence" value="ECO:0007669"/>
    <property type="project" value="UniProtKB-SubCell"/>
</dbReference>
<dbReference type="GO" id="GO:0005634">
    <property type="term" value="C:nucleus"/>
    <property type="evidence" value="ECO:0007669"/>
    <property type="project" value="UniProtKB-SubCell"/>
</dbReference>
<dbReference type="GO" id="GO:0005524">
    <property type="term" value="F:ATP binding"/>
    <property type="evidence" value="ECO:0007669"/>
    <property type="project" value="UniProtKB-KW"/>
</dbReference>
<dbReference type="GO" id="GO:0106310">
    <property type="term" value="F:protein serine kinase activity"/>
    <property type="evidence" value="ECO:0007669"/>
    <property type="project" value="RHEA"/>
</dbReference>
<dbReference type="GO" id="GO:0004674">
    <property type="term" value="F:protein serine/threonine kinase activity"/>
    <property type="evidence" value="ECO:0000318"/>
    <property type="project" value="GO_Central"/>
</dbReference>
<dbReference type="GO" id="GO:0008270">
    <property type="term" value="F:zinc ion binding"/>
    <property type="evidence" value="ECO:0007669"/>
    <property type="project" value="UniProtKB-KW"/>
</dbReference>
<dbReference type="GO" id="GO:0031154">
    <property type="term" value="P:culmination involved in sorocarp development"/>
    <property type="evidence" value="ECO:0000315"/>
    <property type="project" value="dictyBase"/>
</dbReference>
<dbReference type="GO" id="GO:0007165">
    <property type="term" value="P:signal transduction"/>
    <property type="evidence" value="ECO:0000318"/>
    <property type="project" value="GO_Central"/>
</dbReference>
<dbReference type="CDD" id="cd00029">
    <property type="entry name" value="C1"/>
    <property type="match status" value="1"/>
</dbReference>
<dbReference type="Gene3D" id="3.30.60.20">
    <property type="match status" value="1"/>
</dbReference>
<dbReference type="Gene3D" id="1.25.40.20">
    <property type="entry name" value="Ankyrin repeat-containing domain"/>
    <property type="match status" value="1"/>
</dbReference>
<dbReference type="Gene3D" id="3.30.200.20">
    <property type="entry name" value="Phosphorylase Kinase, domain 1"/>
    <property type="match status" value="1"/>
</dbReference>
<dbReference type="Gene3D" id="2.30.29.30">
    <property type="entry name" value="Pleckstrin-homology domain (PH domain)/Phosphotyrosine-binding domain (PTB)"/>
    <property type="match status" value="1"/>
</dbReference>
<dbReference type="Gene3D" id="1.10.510.10">
    <property type="entry name" value="Transferase(Phosphotransferase) domain 1"/>
    <property type="match status" value="1"/>
</dbReference>
<dbReference type="InterPro" id="IPR002110">
    <property type="entry name" value="Ankyrin_rpt"/>
</dbReference>
<dbReference type="InterPro" id="IPR036770">
    <property type="entry name" value="Ankyrin_rpt-contain_sf"/>
</dbReference>
<dbReference type="InterPro" id="IPR046349">
    <property type="entry name" value="C1-like_sf"/>
</dbReference>
<dbReference type="InterPro" id="IPR004182">
    <property type="entry name" value="GRAM"/>
</dbReference>
<dbReference type="InterPro" id="IPR011009">
    <property type="entry name" value="Kinase-like_dom_sf"/>
</dbReference>
<dbReference type="InterPro" id="IPR018000">
    <property type="entry name" value="Neurotransmitter_ion_chnl_CS"/>
</dbReference>
<dbReference type="InterPro" id="IPR002219">
    <property type="entry name" value="PE/DAG-bd"/>
</dbReference>
<dbReference type="InterPro" id="IPR011993">
    <property type="entry name" value="PH-like_dom_sf"/>
</dbReference>
<dbReference type="InterPro" id="IPR000719">
    <property type="entry name" value="Prot_kinase_dom"/>
</dbReference>
<dbReference type="InterPro" id="IPR017441">
    <property type="entry name" value="Protein_kinase_ATP_BS"/>
</dbReference>
<dbReference type="InterPro" id="IPR008271">
    <property type="entry name" value="Ser/Thr_kinase_AS"/>
</dbReference>
<dbReference type="InterPro" id="IPR053215">
    <property type="entry name" value="TKL_Ser/Thr_kinase"/>
</dbReference>
<dbReference type="PANTHER" id="PTHR45756">
    <property type="entry name" value="PALMITOYLTRANSFERASE"/>
    <property type="match status" value="1"/>
</dbReference>
<dbReference type="PANTHER" id="PTHR45756:SF1">
    <property type="entry name" value="PROTEIN KINASE DOMAIN CONTAINING PROTEIN"/>
    <property type="match status" value="1"/>
</dbReference>
<dbReference type="Pfam" id="PF12796">
    <property type="entry name" value="Ank_2"/>
    <property type="match status" value="1"/>
</dbReference>
<dbReference type="Pfam" id="PF00130">
    <property type="entry name" value="C1_1"/>
    <property type="match status" value="1"/>
</dbReference>
<dbReference type="Pfam" id="PF02893">
    <property type="entry name" value="GRAM"/>
    <property type="match status" value="1"/>
</dbReference>
<dbReference type="Pfam" id="PF00069">
    <property type="entry name" value="Pkinase"/>
    <property type="match status" value="1"/>
</dbReference>
<dbReference type="SMART" id="SM00248">
    <property type="entry name" value="ANK"/>
    <property type="match status" value="5"/>
</dbReference>
<dbReference type="SMART" id="SM00109">
    <property type="entry name" value="C1"/>
    <property type="match status" value="1"/>
</dbReference>
<dbReference type="SMART" id="SM00568">
    <property type="entry name" value="GRAM"/>
    <property type="match status" value="1"/>
</dbReference>
<dbReference type="SMART" id="SM00220">
    <property type="entry name" value="S_TKc"/>
    <property type="match status" value="1"/>
</dbReference>
<dbReference type="SUPFAM" id="SSF48403">
    <property type="entry name" value="Ankyrin repeat"/>
    <property type="match status" value="1"/>
</dbReference>
<dbReference type="SUPFAM" id="SSF57889">
    <property type="entry name" value="Cysteine-rich domain"/>
    <property type="match status" value="1"/>
</dbReference>
<dbReference type="SUPFAM" id="SSF56112">
    <property type="entry name" value="Protein kinase-like (PK-like)"/>
    <property type="match status" value="1"/>
</dbReference>
<dbReference type="PROSITE" id="PS50297">
    <property type="entry name" value="ANK_REP_REGION"/>
    <property type="match status" value="1"/>
</dbReference>
<dbReference type="PROSITE" id="PS50088">
    <property type="entry name" value="ANK_REPEAT"/>
    <property type="match status" value="3"/>
</dbReference>
<dbReference type="PROSITE" id="PS00236">
    <property type="entry name" value="NEUROTR_ION_CHANNEL"/>
    <property type="match status" value="1"/>
</dbReference>
<dbReference type="PROSITE" id="PS00107">
    <property type="entry name" value="PROTEIN_KINASE_ATP"/>
    <property type="match status" value="1"/>
</dbReference>
<dbReference type="PROSITE" id="PS50011">
    <property type="entry name" value="PROTEIN_KINASE_DOM"/>
    <property type="match status" value="1"/>
</dbReference>
<dbReference type="PROSITE" id="PS00108">
    <property type="entry name" value="PROTEIN_KINASE_ST"/>
    <property type="match status" value="1"/>
</dbReference>
<dbReference type="PROSITE" id="PS50081">
    <property type="entry name" value="ZF_DAG_PE_2"/>
    <property type="match status" value="1"/>
</dbReference>
<organism>
    <name type="scientific">Dictyostelium discoideum</name>
    <name type="common">Social amoeba</name>
    <dbReference type="NCBI Taxonomy" id="44689"/>
    <lineage>
        <taxon>Eukaryota</taxon>
        <taxon>Amoebozoa</taxon>
        <taxon>Evosea</taxon>
        <taxon>Eumycetozoa</taxon>
        <taxon>Dictyostelia</taxon>
        <taxon>Dictyosteliales</taxon>
        <taxon>Dictyosteliaceae</taxon>
        <taxon>Dictyostelium</taxon>
    </lineage>
</organism>
<feature type="chain" id="PRO_0000354055" description="Ankyrin repeat-containing protein kinase A">
    <location>
        <begin position="1"/>
        <end position="1460"/>
    </location>
</feature>
<feature type="transmembrane region" description="Helical" evidence="1">
    <location>
        <begin position="1293"/>
        <end position="1313"/>
    </location>
</feature>
<feature type="domain" description="GRAM">
    <location>
        <begin position="653"/>
        <end position="724"/>
    </location>
</feature>
<feature type="repeat" description="ANK 1">
    <location>
        <begin position="814"/>
        <end position="843"/>
    </location>
</feature>
<feature type="repeat" description="ANK 2">
    <location>
        <begin position="852"/>
        <end position="883"/>
    </location>
</feature>
<feature type="repeat" description="ANK 3">
    <location>
        <begin position="887"/>
        <end position="920"/>
    </location>
</feature>
<feature type="repeat" description="ANK 4">
    <location>
        <begin position="924"/>
        <end position="955"/>
    </location>
</feature>
<feature type="repeat" description="ANK 5">
    <location>
        <begin position="959"/>
        <end position="988"/>
    </location>
</feature>
<feature type="domain" description="Protein kinase" evidence="2">
    <location>
        <begin position="1112"/>
        <end position="1375"/>
    </location>
</feature>
<feature type="zinc finger region" description="Phorbol-ester/DAG-type" evidence="3">
    <location>
        <begin position="499"/>
        <end position="551"/>
    </location>
</feature>
<feature type="region of interest" description="Disordered" evidence="5">
    <location>
        <begin position="1"/>
        <end position="32"/>
    </location>
</feature>
<feature type="region of interest" description="Disordered" evidence="5">
    <location>
        <begin position="57"/>
        <end position="181"/>
    </location>
</feature>
<feature type="region of interest" description="Disordered" evidence="5">
    <location>
        <begin position="216"/>
        <end position="259"/>
    </location>
</feature>
<feature type="region of interest" description="Disordered" evidence="5">
    <location>
        <begin position="272"/>
        <end position="311"/>
    </location>
</feature>
<feature type="region of interest" description="Disordered" evidence="5">
    <location>
        <begin position="329"/>
        <end position="354"/>
    </location>
</feature>
<feature type="region of interest" description="Disordered" evidence="5">
    <location>
        <begin position="374"/>
        <end position="510"/>
    </location>
</feature>
<feature type="region of interest" description="Interaction with 14-3-3 protein">
    <location>
        <begin position="467"/>
        <end position="667"/>
    </location>
</feature>
<feature type="region of interest" description="Disordered" evidence="5">
    <location>
        <begin position="551"/>
        <end position="608"/>
    </location>
</feature>
<feature type="region of interest" description="Disordered" evidence="5">
    <location>
        <begin position="1434"/>
        <end position="1460"/>
    </location>
</feature>
<feature type="coiled-coil region" evidence="1">
    <location>
        <begin position="1425"/>
        <end position="1460"/>
    </location>
</feature>
<feature type="compositionally biased region" description="Low complexity" evidence="5">
    <location>
        <begin position="8"/>
        <end position="32"/>
    </location>
</feature>
<feature type="compositionally biased region" description="Low complexity" evidence="5">
    <location>
        <begin position="61"/>
        <end position="86"/>
    </location>
</feature>
<feature type="compositionally biased region" description="Low complexity" evidence="5">
    <location>
        <begin position="111"/>
        <end position="128"/>
    </location>
</feature>
<feature type="compositionally biased region" description="Polar residues" evidence="5">
    <location>
        <begin position="129"/>
        <end position="140"/>
    </location>
</feature>
<feature type="compositionally biased region" description="Basic and acidic residues" evidence="5">
    <location>
        <begin position="149"/>
        <end position="162"/>
    </location>
</feature>
<feature type="compositionally biased region" description="Low complexity" evidence="5">
    <location>
        <begin position="220"/>
        <end position="259"/>
    </location>
</feature>
<feature type="compositionally biased region" description="Low complexity" evidence="5">
    <location>
        <begin position="272"/>
        <end position="300"/>
    </location>
</feature>
<feature type="compositionally biased region" description="Polar residues" evidence="5">
    <location>
        <begin position="329"/>
        <end position="345"/>
    </location>
</feature>
<feature type="compositionally biased region" description="Polar residues" evidence="5">
    <location>
        <begin position="384"/>
        <end position="404"/>
    </location>
</feature>
<feature type="compositionally biased region" description="Low complexity" evidence="5">
    <location>
        <begin position="405"/>
        <end position="422"/>
    </location>
</feature>
<feature type="compositionally biased region" description="Polar residues" evidence="5">
    <location>
        <begin position="423"/>
        <end position="434"/>
    </location>
</feature>
<feature type="compositionally biased region" description="Low complexity" evidence="5">
    <location>
        <begin position="435"/>
        <end position="461"/>
    </location>
</feature>
<feature type="compositionally biased region" description="Basic residues" evidence="5">
    <location>
        <begin position="462"/>
        <end position="472"/>
    </location>
</feature>
<feature type="compositionally biased region" description="Low complexity" evidence="5">
    <location>
        <begin position="486"/>
        <end position="497"/>
    </location>
</feature>
<feature type="compositionally biased region" description="Polar residues" evidence="5">
    <location>
        <begin position="559"/>
        <end position="568"/>
    </location>
</feature>
<feature type="compositionally biased region" description="Low complexity" evidence="5">
    <location>
        <begin position="569"/>
        <end position="608"/>
    </location>
</feature>
<feature type="active site" description="Proton acceptor" evidence="2 4">
    <location>
        <position position="1231"/>
    </location>
</feature>
<feature type="binding site" evidence="2">
    <location>
        <begin position="1118"/>
        <end position="1126"/>
    </location>
    <ligand>
        <name>ATP</name>
        <dbReference type="ChEBI" id="CHEBI:30616"/>
    </ligand>
</feature>
<feature type="binding site" evidence="2">
    <location>
        <position position="1139"/>
    </location>
    <ligand>
        <name>ATP</name>
        <dbReference type="ChEBI" id="CHEBI:30616"/>
    </ligand>
</feature>
<sequence length="1460" mass="161727">MSIKLPLSNINSGGNSNNSSSSNSTSNNNININIGNGIPTNIEKMTFEDSETQKLNIKQQSNNNTSTSVCVSSIHSSSPISSPTSHQVNKSSGSLPPVIKRSPTTTHHHNSSGSNSSSSSSGSNNNNNQIKTSNGMNKPNPTGFLFGSKPRENSQNKIDDNKGVNLAVSTSNSSNNFHKSHSESNIININAPPVETVNMEEIYNNIPSSISMENIRENENNNNSSNNNSNNNNNNNNNNNNSNNINNVNGNKSSLASSTSSISSLSSVSTLSTSNAATNTNTNANTTSTTKTTSTVRSTSPTQFKPRVEFDENNPNAIILSRQRCKSISSPSDFRLNPPSNVHMPTSSLSTSTSTTNVNGLLLPNGVGGVSMSFTPSGLPMTPPTNSSQVDTLQMSTESITIQPSSLDSSSESVSDGLQSVSGSPVTASPSPTISNNTNATTTNNNNNTNTNNNNNNNNNQHNHHHHQHSHSQQHDVYQIKKENFPSSPTSPTLLPSETHDFSSEYSSNPGGKCAICRKPLWSFPISDKSRRCRDCSLVVHRACVPLATECPSAKKSPSKLSVPNGNQSNSSSSSSSSSSSSSSSNSSSSNTKGHSRTPSSPSVSSIPGFQLTSNASQNLHVNSHTLSLLVNGATIDSNHYKRNKKSLEAGARDFHFIFRGCGIPLDEFPLDSYVCGLYSYFAHGRLYLTESYVCFYDGFVFDRTKERTKIIKVSNIASIEKRSSGLNPSAIKIKTFDDQSFIFTHFMHREVAFDDLEGLLIHQESLHFAHSIVANNFPGMNEAIRGQTKRLLSRARLDGHYQIHSKIRCPMPSKEILLMSAIKNNNLDMVVTLLNYYCQVNSDEINSVDSKGYTPLHNAVFSECSDQIFMHLLNQKEVRVRERNMDGNTPLHYFCQKFKSPECQRIVQAMIEKGANINEQNYNGETPLHKAIFNHSVRLLMVYILLKNNANVNIVNNAGESPLHYAVRLGRLDVAKMLLAAGADPTIISLRDRKTALALAVDYDVCPEISDLLRRLDTITTSLEMYELEKFQASLVVEELQKENVVARLDEKLLDKIGCTDKEERRKFLSLKSNRLLIHHPARTQGAKIILKEMETMDIKNGKLIISETELEYTEKIGSGASGKVFKGIYRGRVVAIKVLKSADDEMTREDFLKEFGVLASLESHTIVGLYGVVLEPKICLVMEYCSNGSIYHSIRKNPPSWERFFSFVQQMLAGINALHQSTPQVLHRDIKTLNFLVNHNNKVKVADFGLSRFNTESNQETLNKTRGTSVYCAPEVFEGKEYNERSDMYSMGIVMWEIVYCVVYGCYMIPYQEYNKMFNAFQVALLVNSSKRVLRPTIPIGVPQVLKDLIYCLWDHDVSSRPTATEAMTALAVCEKEYKQNKAQWELVITKKEPTPLPRVAPLPAFPGYRQFYEQNLDIKPIPEEEQIYQEAMEKQRRNQEASANRNQKNKELLNNNN</sequence>
<evidence type="ECO:0000255" key="1"/>
<evidence type="ECO:0000255" key="2">
    <source>
        <dbReference type="PROSITE-ProRule" id="PRU00159"/>
    </source>
</evidence>
<evidence type="ECO:0000255" key="3">
    <source>
        <dbReference type="PROSITE-ProRule" id="PRU00226"/>
    </source>
</evidence>
<evidence type="ECO:0000255" key="4">
    <source>
        <dbReference type="PROSITE-ProRule" id="PRU10027"/>
    </source>
</evidence>
<evidence type="ECO:0000256" key="5">
    <source>
        <dbReference type="SAM" id="MobiDB-lite"/>
    </source>
</evidence>
<evidence type="ECO:0000269" key="6">
    <source>
    </source>
</evidence>
<evidence type="ECO:0000305" key="7"/>
<reference key="1">
    <citation type="journal article" date="2005" name="Nature">
        <title>The genome of the social amoeba Dictyostelium discoideum.</title>
        <authorList>
            <person name="Eichinger L."/>
            <person name="Pachebat J.A."/>
            <person name="Gloeckner G."/>
            <person name="Rajandream M.A."/>
            <person name="Sucgang R."/>
            <person name="Berriman M."/>
            <person name="Song J."/>
            <person name="Olsen R."/>
            <person name="Szafranski K."/>
            <person name="Xu Q."/>
            <person name="Tunggal B."/>
            <person name="Kummerfeld S."/>
            <person name="Madera M."/>
            <person name="Konfortov B.A."/>
            <person name="Rivero F."/>
            <person name="Bankier A.T."/>
            <person name="Lehmann R."/>
            <person name="Hamlin N."/>
            <person name="Davies R."/>
            <person name="Gaudet P."/>
            <person name="Fey P."/>
            <person name="Pilcher K."/>
            <person name="Chen G."/>
            <person name="Saunders D."/>
            <person name="Sodergren E.J."/>
            <person name="Davis P."/>
            <person name="Kerhornou A."/>
            <person name="Nie X."/>
            <person name="Hall N."/>
            <person name="Anjard C."/>
            <person name="Hemphill L."/>
            <person name="Bason N."/>
            <person name="Farbrother P."/>
            <person name="Desany B."/>
            <person name="Just E."/>
            <person name="Morio T."/>
            <person name="Rost R."/>
            <person name="Churcher C.M."/>
            <person name="Cooper J."/>
            <person name="Haydock S."/>
            <person name="van Driessche N."/>
            <person name="Cronin A."/>
            <person name="Goodhead I."/>
            <person name="Muzny D.M."/>
            <person name="Mourier T."/>
            <person name="Pain A."/>
            <person name="Lu M."/>
            <person name="Harper D."/>
            <person name="Lindsay R."/>
            <person name="Hauser H."/>
            <person name="James K.D."/>
            <person name="Quiles M."/>
            <person name="Madan Babu M."/>
            <person name="Saito T."/>
            <person name="Buchrieser C."/>
            <person name="Wardroper A."/>
            <person name="Felder M."/>
            <person name="Thangavelu M."/>
            <person name="Johnson D."/>
            <person name="Knights A."/>
            <person name="Loulseged H."/>
            <person name="Mungall K.L."/>
            <person name="Oliver K."/>
            <person name="Price C."/>
            <person name="Quail M.A."/>
            <person name="Urushihara H."/>
            <person name="Hernandez J."/>
            <person name="Rabbinowitsch E."/>
            <person name="Steffen D."/>
            <person name="Sanders M."/>
            <person name="Ma J."/>
            <person name="Kohara Y."/>
            <person name="Sharp S."/>
            <person name="Simmonds M.N."/>
            <person name="Spiegler S."/>
            <person name="Tivey A."/>
            <person name="Sugano S."/>
            <person name="White B."/>
            <person name="Walker D."/>
            <person name="Woodward J.R."/>
            <person name="Winckler T."/>
            <person name="Tanaka Y."/>
            <person name="Shaulsky G."/>
            <person name="Schleicher M."/>
            <person name="Weinstock G.M."/>
            <person name="Rosenthal A."/>
            <person name="Cox E.C."/>
            <person name="Chisholm R.L."/>
            <person name="Gibbs R.A."/>
            <person name="Loomis W.F."/>
            <person name="Platzer M."/>
            <person name="Kay R.R."/>
            <person name="Williams J.G."/>
            <person name="Dear P.H."/>
            <person name="Noegel A.A."/>
            <person name="Barrell B.G."/>
            <person name="Kuspa A."/>
        </authorList>
    </citation>
    <scope>NUCLEOTIDE SEQUENCE [LARGE SCALE GENOMIC DNA]</scope>
    <source>
        <strain>AX4</strain>
    </source>
</reference>
<reference key="2">
    <citation type="journal article" date="2003" name="Dev. Biol.">
        <title>The novel ankyrin-repeat containing kinase ARCK-1 acts as a suppressor of the Spalten signaling pathway during Dictyostelium development.</title>
        <authorList>
            <person name="Aubry L."/>
            <person name="Lee S."/>
            <person name="Ravanel K."/>
            <person name="Firtel R.A."/>
        </authorList>
    </citation>
    <scope>SUBCELLULAR LOCATION</scope>
    <scope>FUNCTION</scope>
    <scope>DEVELOPMENTAL STAGE</scope>
    <scope>INTERACTION WITH 14-3-3 PROTEIN</scope>
    <scope>DISRUPTION PHENOTYPE</scope>
</reference>
<name>ARKA_DICDI</name>
<protein>
    <recommendedName>
        <fullName>Ankyrin repeat-containing protein kinase A</fullName>
        <ecNumber>2.7.11.1</ecNumber>
    </recommendedName>
    <alternativeName>
        <fullName>Ankyrin repeat-containing protein kinase 1</fullName>
    </alternativeName>
</protein>